<proteinExistence type="inferred from homology"/>
<gene>
    <name type="primary">tim21</name>
    <name type="ORF">SPBC1289.09</name>
</gene>
<name>TIM21_SCHPO</name>
<protein>
    <recommendedName>
        <fullName>Mitochondrial import inner membrane translocase subunit tim21</fullName>
    </recommendedName>
</protein>
<sequence length="223" mass="25568">MIRTIQRQSATRFSSALVQRRLYSLASDSLNKQRKPQEEGRLARIFKDPSNKAWKDLTAPQKAYRTSANIGNFSIVIFGGGVFGLIIYALVTSIWKGEAHYGDEAFELLKANEECRYVFGDHMKALGEATHPLRRTHGILTSRVWDHHGVEHLVLQFHLIGNERKGHVFGRLVNVQGDYKWEYLFVDVANYGKIIIFDHTNSVRQQHKNFGLWGSLKNITWGN</sequence>
<reference key="1">
    <citation type="journal article" date="2002" name="Nature">
        <title>The genome sequence of Schizosaccharomyces pombe.</title>
        <authorList>
            <person name="Wood V."/>
            <person name="Gwilliam R."/>
            <person name="Rajandream M.A."/>
            <person name="Lyne M.H."/>
            <person name="Lyne R."/>
            <person name="Stewart A."/>
            <person name="Sgouros J.G."/>
            <person name="Peat N."/>
            <person name="Hayles J."/>
            <person name="Baker S.G."/>
            <person name="Basham D."/>
            <person name="Bowman S."/>
            <person name="Brooks K."/>
            <person name="Brown D."/>
            <person name="Brown S."/>
            <person name="Chillingworth T."/>
            <person name="Churcher C.M."/>
            <person name="Collins M."/>
            <person name="Connor R."/>
            <person name="Cronin A."/>
            <person name="Davis P."/>
            <person name="Feltwell T."/>
            <person name="Fraser A."/>
            <person name="Gentles S."/>
            <person name="Goble A."/>
            <person name="Hamlin N."/>
            <person name="Harris D.E."/>
            <person name="Hidalgo J."/>
            <person name="Hodgson G."/>
            <person name="Holroyd S."/>
            <person name="Hornsby T."/>
            <person name="Howarth S."/>
            <person name="Huckle E.J."/>
            <person name="Hunt S."/>
            <person name="Jagels K."/>
            <person name="James K.D."/>
            <person name="Jones L."/>
            <person name="Jones M."/>
            <person name="Leather S."/>
            <person name="McDonald S."/>
            <person name="McLean J."/>
            <person name="Mooney P."/>
            <person name="Moule S."/>
            <person name="Mungall K.L."/>
            <person name="Murphy L.D."/>
            <person name="Niblett D."/>
            <person name="Odell C."/>
            <person name="Oliver K."/>
            <person name="O'Neil S."/>
            <person name="Pearson D."/>
            <person name="Quail M.A."/>
            <person name="Rabbinowitsch E."/>
            <person name="Rutherford K.M."/>
            <person name="Rutter S."/>
            <person name="Saunders D."/>
            <person name="Seeger K."/>
            <person name="Sharp S."/>
            <person name="Skelton J."/>
            <person name="Simmonds M.N."/>
            <person name="Squares R."/>
            <person name="Squares S."/>
            <person name="Stevens K."/>
            <person name="Taylor K."/>
            <person name="Taylor R.G."/>
            <person name="Tivey A."/>
            <person name="Walsh S.V."/>
            <person name="Warren T."/>
            <person name="Whitehead S."/>
            <person name="Woodward J.R."/>
            <person name="Volckaert G."/>
            <person name="Aert R."/>
            <person name="Robben J."/>
            <person name="Grymonprez B."/>
            <person name="Weltjens I."/>
            <person name="Vanstreels E."/>
            <person name="Rieger M."/>
            <person name="Schaefer M."/>
            <person name="Mueller-Auer S."/>
            <person name="Gabel C."/>
            <person name="Fuchs M."/>
            <person name="Duesterhoeft A."/>
            <person name="Fritzc C."/>
            <person name="Holzer E."/>
            <person name="Moestl D."/>
            <person name="Hilbert H."/>
            <person name="Borzym K."/>
            <person name="Langer I."/>
            <person name="Beck A."/>
            <person name="Lehrach H."/>
            <person name="Reinhardt R."/>
            <person name="Pohl T.M."/>
            <person name="Eger P."/>
            <person name="Zimmermann W."/>
            <person name="Wedler H."/>
            <person name="Wambutt R."/>
            <person name="Purnelle B."/>
            <person name="Goffeau A."/>
            <person name="Cadieu E."/>
            <person name="Dreano S."/>
            <person name="Gloux S."/>
            <person name="Lelaure V."/>
            <person name="Mottier S."/>
            <person name="Galibert F."/>
            <person name="Aves S.J."/>
            <person name="Xiang Z."/>
            <person name="Hunt C."/>
            <person name="Moore K."/>
            <person name="Hurst S.M."/>
            <person name="Lucas M."/>
            <person name="Rochet M."/>
            <person name="Gaillardin C."/>
            <person name="Tallada V.A."/>
            <person name="Garzon A."/>
            <person name="Thode G."/>
            <person name="Daga R.R."/>
            <person name="Cruzado L."/>
            <person name="Jimenez J."/>
            <person name="Sanchez M."/>
            <person name="del Rey F."/>
            <person name="Benito J."/>
            <person name="Dominguez A."/>
            <person name="Revuelta J.L."/>
            <person name="Moreno S."/>
            <person name="Armstrong J."/>
            <person name="Forsburg S.L."/>
            <person name="Cerutti L."/>
            <person name="Lowe T."/>
            <person name="McCombie W.R."/>
            <person name="Paulsen I."/>
            <person name="Potashkin J."/>
            <person name="Shpakovski G.V."/>
            <person name="Ussery D."/>
            <person name="Barrell B.G."/>
            <person name="Nurse P."/>
        </authorList>
    </citation>
    <scope>NUCLEOTIDE SEQUENCE [LARGE SCALE GENOMIC DNA]</scope>
    <source>
        <strain>972 / ATCC 24843</strain>
    </source>
</reference>
<organism>
    <name type="scientific">Schizosaccharomyces pombe (strain 972 / ATCC 24843)</name>
    <name type="common">Fission yeast</name>
    <dbReference type="NCBI Taxonomy" id="284812"/>
    <lineage>
        <taxon>Eukaryota</taxon>
        <taxon>Fungi</taxon>
        <taxon>Dikarya</taxon>
        <taxon>Ascomycota</taxon>
        <taxon>Taphrinomycotina</taxon>
        <taxon>Schizosaccharomycetes</taxon>
        <taxon>Schizosaccharomycetales</taxon>
        <taxon>Schizosaccharomycetaceae</taxon>
        <taxon>Schizosaccharomyces</taxon>
    </lineage>
</organism>
<feature type="transit peptide" description="Mitochondrion" evidence="2">
    <location>
        <begin position="1"/>
        <end position="23"/>
    </location>
</feature>
<feature type="chain" id="PRO_0000043165" description="Mitochondrial import inner membrane translocase subunit tim21">
    <location>
        <begin position="24"/>
        <end position="223"/>
    </location>
</feature>
<feature type="topological domain" description="Mitochondrial matrix" evidence="2">
    <location>
        <begin position="24"/>
        <end position="74"/>
    </location>
</feature>
<feature type="transmembrane region" description="Helical" evidence="2">
    <location>
        <begin position="75"/>
        <end position="95"/>
    </location>
</feature>
<feature type="topological domain" description="Mitochondrial intermembrane" evidence="2">
    <location>
        <begin position="96"/>
        <end position="223"/>
    </location>
</feature>
<comment type="function">
    <text evidence="1">Essential component of the TIM23 complex, a complex that mediates the translocation of transit peptide-containing proteins across the mitochondrial inner membrane. Required to keep the TOM and the TIM23 complexes in close contact. At some point, it is released from the TOM23 complex to allow protein translocation into the mitochondrial matrix (By similarity).</text>
</comment>
<comment type="subunit">
    <text evidence="1">Component of the TIM23 complex, at least composed of tim23, tim17, tim50 and tim21.</text>
</comment>
<comment type="subcellular location">
    <subcellularLocation>
        <location evidence="1">Mitochondrion inner membrane</location>
        <topology evidence="1">Single-pass membrane protein</topology>
    </subcellularLocation>
</comment>
<comment type="similarity">
    <text evidence="3">Belongs to the TIM21 family.</text>
</comment>
<evidence type="ECO:0000250" key="1"/>
<evidence type="ECO:0000255" key="2"/>
<evidence type="ECO:0000305" key="3"/>
<keyword id="KW-0472">Membrane</keyword>
<keyword id="KW-0496">Mitochondrion</keyword>
<keyword id="KW-0999">Mitochondrion inner membrane</keyword>
<keyword id="KW-0653">Protein transport</keyword>
<keyword id="KW-1185">Reference proteome</keyword>
<keyword id="KW-0809">Transit peptide</keyword>
<keyword id="KW-0811">Translocation</keyword>
<keyword id="KW-0812">Transmembrane</keyword>
<keyword id="KW-1133">Transmembrane helix</keyword>
<keyword id="KW-0813">Transport</keyword>
<dbReference type="EMBL" id="CU329671">
    <property type="protein sequence ID" value="CAB38689.1"/>
    <property type="molecule type" value="Genomic_DNA"/>
</dbReference>
<dbReference type="PIR" id="T39360">
    <property type="entry name" value="T39360"/>
</dbReference>
<dbReference type="RefSeq" id="NP_596833.1">
    <property type="nucleotide sequence ID" value="NM_001023854.2"/>
</dbReference>
<dbReference type="SMR" id="O94618"/>
<dbReference type="BioGRID" id="276525">
    <property type="interactions" value="10"/>
</dbReference>
<dbReference type="ComplexPortal" id="CPX-540">
    <property type="entry name" value="Mitochondrial inner membrane pre-sequence translocase complex"/>
</dbReference>
<dbReference type="FunCoup" id="O94618">
    <property type="interactions" value="110"/>
</dbReference>
<dbReference type="STRING" id="284812.O94618"/>
<dbReference type="PaxDb" id="4896-SPBC1289.09.1"/>
<dbReference type="EnsemblFungi" id="SPBC1289.09.1">
    <property type="protein sequence ID" value="SPBC1289.09.1:pep"/>
    <property type="gene ID" value="SPBC1289.09"/>
</dbReference>
<dbReference type="GeneID" id="2539981"/>
<dbReference type="KEGG" id="spo:2539981"/>
<dbReference type="PomBase" id="SPBC1289.09">
    <property type="gene designation" value="tim21"/>
</dbReference>
<dbReference type="VEuPathDB" id="FungiDB:SPBC1289.09"/>
<dbReference type="eggNOG" id="KOG4836">
    <property type="taxonomic scope" value="Eukaryota"/>
</dbReference>
<dbReference type="HOGENOM" id="CLU_1240758_0_0_1"/>
<dbReference type="InParanoid" id="O94618"/>
<dbReference type="OMA" id="KAYRTSA"/>
<dbReference type="PhylomeDB" id="O94618"/>
<dbReference type="PRO" id="PR:O94618"/>
<dbReference type="Proteomes" id="UP000002485">
    <property type="component" value="Chromosome II"/>
</dbReference>
<dbReference type="GO" id="GO:0005739">
    <property type="term" value="C:mitochondrion"/>
    <property type="evidence" value="ECO:0007005"/>
    <property type="project" value="PomBase"/>
</dbReference>
<dbReference type="GO" id="GO:0005744">
    <property type="term" value="C:TIM23 mitochondrial import inner membrane translocase complex"/>
    <property type="evidence" value="ECO:0000318"/>
    <property type="project" value="GO_Central"/>
</dbReference>
<dbReference type="GO" id="GO:0006886">
    <property type="term" value="P:intracellular protein transport"/>
    <property type="evidence" value="ECO:0000304"/>
    <property type="project" value="PomBase"/>
</dbReference>
<dbReference type="GO" id="GO:0030150">
    <property type="term" value="P:protein import into mitochondrial matrix"/>
    <property type="evidence" value="ECO:0000266"/>
    <property type="project" value="PomBase"/>
</dbReference>
<dbReference type="Gene3D" id="3.10.450.320">
    <property type="entry name" value="Mitochondrial import inner membrane translocase subunit Tim21"/>
    <property type="match status" value="1"/>
</dbReference>
<dbReference type="InterPro" id="IPR013261">
    <property type="entry name" value="Tim21"/>
</dbReference>
<dbReference type="InterPro" id="IPR038552">
    <property type="entry name" value="Tim21_IMS_sf"/>
</dbReference>
<dbReference type="PANTHER" id="PTHR13032">
    <property type="entry name" value="MITOCHONDRIAL IMPORT INNER MEMBRANE TRANSLOCASE SUBUNIT TIM21"/>
    <property type="match status" value="1"/>
</dbReference>
<dbReference type="PANTHER" id="PTHR13032:SF6">
    <property type="entry name" value="MITOCHONDRIAL IMPORT INNER MEMBRANE TRANSLOCASE SUBUNIT TIM21"/>
    <property type="match status" value="1"/>
</dbReference>
<dbReference type="Pfam" id="PF08294">
    <property type="entry name" value="TIM21"/>
    <property type="match status" value="1"/>
</dbReference>
<accession>O94618</accession>